<protein>
    <recommendedName>
        <fullName evidence="1">Crossover junction endodeoxyribonuclease RuvC</fullName>
        <ecNumber evidence="1">3.1.21.10</ecNumber>
    </recommendedName>
    <alternativeName>
        <fullName evidence="1">Holliday junction nuclease RuvC</fullName>
    </alternativeName>
    <alternativeName>
        <fullName evidence="1">Holliday junction resolvase RuvC</fullName>
    </alternativeName>
</protein>
<keyword id="KW-0963">Cytoplasm</keyword>
<keyword id="KW-0227">DNA damage</keyword>
<keyword id="KW-0233">DNA recombination</keyword>
<keyword id="KW-0234">DNA repair</keyword>
<keyword id="KW-0238">DNA-binding</keyword>
<keyword id="KW-0255">Endonuclease</keyword>
<keyword id="KW-0378">Hydrolase</keyword>
<keyword id="KW-0460">Magnesium</keyword>
<keyword id="KW-0479">Metal-binding</keyword>
<keyword id="KW-0540">Nuclease</keyword>
<name>RUVC_YERPN</name>
<reference key="1">
    <citation type="journal article" date="2006" name="J. Bacteriol.">
        <title>Complete genome sequence of Yersinia pestis strains Antiqua and Nepal516: evidence of gene reduction in an emerging pathogen.</title>
        <authorList>
            <person name="Chain P.S.G."/>
            <person name="Hu P."/>
            <person name="Malfatti S.A."/>
            <person name="Radnedge L."/>
            <person name="Larimer F."/>
            <person name="Vergez L.M."/>
            <person name="Worsham P."/>
            <person name="Chu M.C."/>
            <person name="Andersen G.L."/>
        </authorList>
    </citation>
    <scope>NUCLEOTIDE SEQUENCE [LARGE SCALE GENOMIC DNA]</scope>
    <source>
        <strain>Nepal516</strain>
    </source>
</reference>
<reference key="2">
    <citation type="submission" date="2009-04" db="EMBL/GenBank/DDBJ databases">
        <title>Yersinia pestis Nepal516A whole genome shotgun sequencing project.</title>
        <authorList>
            <person name="Plunkett G. III"/>
            <person name="Anderson B.D."/>
            <person name="Baumler D.J."/>
            <person name="Burland V."/>
            <person name="Cabot E.L."/>
            <person name="Glasner J.D."/>
            <person name="Mau B."/>
            <person name="Neeno-Eckwall E."/>
            <person name="Perna N.T."/>
            <person name="Munk A.C."/>
            <person name="Tapia R."/>
            <person name="Green L.D."/>
            <person name="Rogers Y.C."/>
            <person name="Detter J.C."/>
            <person name="Bruce D.C."/>
            <person name="Brettin T.S."/>
        </authorList>
    </citation>
    <scope>NUCLEOTIDE SEQUENCE [LARGE SCALE GENOMIC DNA]</scope>
    <source>
        <strain>Nepal516</strain>
    </source>
</reference>
<comment type="function">
    <text evidence="1">The RuvA-RuvB-RuvC complex processes Holliday junction (HJ) DNA during genetic recombination and DNA repair. Endonuclease that resolves HJ intermediates. Cleaves cruciform DNA by making single-stranded nicks across the HJ at symmetrical positions within the homologous arms, yielding a 5'-phosphate and a 3'-hydroxyl group; requires a central core of homology in the junction. The consensus cleavage sequence is 5'-(A/T)TT(C/G)-3'. Cleavage occurs on the 3'-side of the TT dinucleotide at the point of strand exchange. HJ branch migration catalyzed by RuvA-RuvB allows RuvC to scan DNA until it finds its consensus sequence, where it cleaves and resolves the cruciform DNA.</text>
</comment>
<comment type="catalytic activity">
    <reaction evidence="1">
        <text>Endonucleolytic cleavage at a junction such as a reciprocal single-stranded crossover between two homologous DNA duplexes (Holliday junction).</text>
        <dbReference type="EC" id="3.1.21.10"/>
    </reaction>
</comment>
<comment type="cofactor">
    <cofactor evidence="1">
        <name>Mg(2+)</name>
        <dbReference type="ChEBI" id="CHEBI:18420"/>
    </cofactor>
    <text evidence="1">Binds 2 Mg(2+) ion per subunit.</text>
</comment>
<comment type="subunit">
    <text evidence="1">Homodimer which binds Holliday junction (HJ) DNA. The HJ becomes 2-fold symmetrical on binding to RuvC with unstacked arms; it has a different conformation from HJ DNA in complex with RuvA. In the full resolvosome a probable DNA-RuvA(4)-RuvB(12)-RuvC(2) complex forms which resolves the HJ.</text>
</comment>
<comment type="subcellular location">
    <subcellularLocation>
        <location evidence="1">Cytoplasm</location>
    </subcellularLocation>
</comment>
<comment type="similarity">
    <text evidence="1">Belongs to the RuvC family.</text>
</comment>
<feature type="chain" id="PRO_1000002857" description="Crossover junction endodeoxyribonuclease RuvC">
    <location>
        <begin position="1"/>
        <end position="173"/>
    </location>
</feature>
<feature type="active site" evidence="1">
    <location>
        <position position="8"/>
    </location>
</feature>
<feature type="active site" evidence="1">
    <location>
        <position position="67"/>
    </location>
</feature>
<feature type="active site" evidence="1">
    <location>
        <position position="139"/>
    </location>
</feature>
<feature type="binding site" evidence="1">
    <location>
        <position position="8"/>
    </location>
    <ligand>
        <name>Mg(2+)</name>
        <dbReference type="ChEBI" id="CHEBI:18420"/>
        <label>1</label>
    </ligand>
</feature>
<feature type="binding site" evidence="1">
    <location>
        <position position="67"/>
    </location>
    <ligand>
        <name>Mg(2+)</name>
        <dbReference type="ChEBI" id="CHEBI:18420"/>
        <label>2</label>
    </ligand>
</feature>
<feature type="binding site" evidence="1">
    <location>
        <position position="139"/>
    </location>
    <ligand>
        <name>Mg(2+)</name>
        <dbReference type="ChEBI" id="CHEBI:18420"/>
        <label>1</label>
    </ligand>
</feature>
<sequence>MAIVLGIDPGSRVTGYGVIRQQGRQLTYLGSGCIRTVVDDMPTRLKLIYAGVTEIITQFQPDFFAIEQVFMAKNPDSALKLGQARGAAIVAAVNLNLPVSEYAARQVKQTVVGTGAAEKSQVQHMVRSLLKLPANPQADAADALAIAITHCHLSQNTLRLGNDQMTLSRGRIR</sequence>
<evidence type="ECO:0000255" key="1">
    <source>
        <dbReference type="HAMAP-Rule" id="MF_00034"/>
    </source>
</evidence>
<proteinExistence type="inferred from homology"/>
<dbReference type="EC" id="3.1.21.10" evidence="1"/>
<dbReference type="EMBL" id="CP000305">
    <property type="protein sequence ID" value="ABG17863.1"/>
    <property type="molecule type" value="Genomic_DNA"/>
</dbReference>
<dbReference type="EMBL" id="ACNQ01000009">
    <property type="protein sequence ID" value="EEO76969.1"/>
    <property type="molecule type" value="Genomic_DNA"/>
</dbReference>
<dbReference type="RefSeq" id="WP_002211201.1">
    <property type="nucleotide sequence ID" value="NZ_ACNQ01000009.1"/>
</dbReference>
<dbReference type="SMR" id="Q1CJG7"/>
<dbReference type="GeneID" id="57976605"/>
<dbReference type="KEGG" id="ypn:YPN_1533"/>
<dbReference type="HOGENOM" id="CLU_091257_2_1_6"/>
<dbReference type="Proteomes" id="UP000008936">
    <property type="component" value="Chromosome"/>
</dbReference>
<dbReference type="GO" id="GO:0005737">
    <property type="term" value="C:cytoplasm"/>
    <property type="evidence" value="ECO:0007669"/>
    <property type="project" value="UniProtKB-SubCell"/>
</dbReference>
<dbReference type="GO" id="GO:0048476">
    <property type="term" value="C:Holliday junction resolvase complex"/>
    <property type="evidence" value="ECO:0007669"/>
    <property type="project" value="UniProtKB-UniRule"/>
</dbReference>
<dbReference type="GO" id="GO:0008821">
    <property type="term" value="F:crossover junction DNA endonuclease activity"/>
    <property type="evidence" value="ECO:0007669"/>
    <property type="project" value="UniProtKB-UniRule"/>
</dbReference>
<dbReference type="GO" id="GO:0003677">
    <property type="term" value="F:DNA binding"/>
    <property type="evidence" value="ECO:0007669"/>
    <property type="project" value="UniProtKB-KW"/>
</dbReference>
<dbReference type="GO" id="GO:0000287">
    <property type="term" value="F:magnesium ion binding"/>
    <property type="evidence" value="ECO:0007669"/>
    <property type="project" value="UniProtKB-UniRule"/>
</dbReference>
<dbReference type="GO" id="GO:0006310">
    <property type="term" value="P:DNA recombination"/>
    <property type="evidence" value="ECO:0007669"/>
    <property type="project" value="UniProtKB-UniRule"/>
</dbReference>
<dbReference type="GO" id="GO:0006281">
    <property type="term" value="P:DNA repair"/>
    <property type="evidence" value="ECO:0007669"/>
    <property type="project" value="UniProtKB-UniRule"/>
</dbReference>
<dbReference type="CDD" id="cd16962">
    <property type="entry name" value="RuvC"/>
    <property type="match status" value="1"/>
</dbReference>
<dbReference type="FunFam" id="3.30.420.10:FF:000002">
    <property type="entry name" value="Crossover junction endodeoxyribonuclease RuvC"/>
    <property type="match status" value="1"/>
</dbReference>
<dbReference type="Gene3D" id="3.30.420.10">
    <property type="entry name" value="Ribonuclease H-like superfamily/Ribonuclease H"/>
    <property type="match status" value="1"/>
</dbReference>
<dbReference type="HAMAP" id="MF_00034">
    <property type="entry name" value="RuvC"/>
    <property type="match status" value="1"/>
</dbReference>
<dbReference type="InterPro" id="IPR012337">
    <property type="entry name" value="RNaseH-like_sf"/>
</dbReference>
<dbReference type="InterPro" id="IPR036397">
    <property type="entry name" value="RNaseH_sf"/>
</dbReference>
<dbReference type="InterPro" id="IPR020563">
    <property type="entry name" value="X-over_junc_endoDNase_Mg_BS"/>
</dbReference>
<dbReference type="InterPro" id="IPR002176">
    <property type="entry name" value="X-over_junc_endoDNase_RuvC"/>
</dbReference>
<dbReference type="NCBIfam" id="TIGR00228">
    <property type="entry name" value="ruvC"/>
    <property type="match status" value="1"/>
</dbReference>
<dbReference type="PANTHER" id="PTHR30194">
    <property type="entry name" value="CROSSOVER JUNCTION ENDODEOXYRIBONUCLEASE RUVC"/>
    <property type="match status" value="1"/>
</dbReference>
<dbReference type="PANTHER" id="PTHR30194:SF3">
    <property type="entry name" value="CROSSOVER JUNCTION ENDODEOXYRIBONUCLEASE RUVC"/>
    <property type="match status" value="1"/>
</dbReference>
<dbReference type="Pfam" id="PF02075">
    <property type="entry name" value="RuvC"/>
    <property type="match status" value="1"/>
</dbReference>
<dbReference type="PRINTS" id="PR00696">
    <property type="entry name" value="RSOLVASERUVC"/>
</dbReference>
<dbReference type="SUPFAM" id="SSF53098">
    <property type="entry name" value="Ribonuclease H-like"/>
    <property type="match status" value="1"/>
</dbReference>
<dbReference type="PROSITE" id="PS01321">
    <property type="entry name" value="RUVC"/>
    <property type="match status" value="1"/>
</dbReference>
<organism>
    <name type="scientific">Yersinia pestis bv. Antiqua (strain Nepal516)</name>
    <dbReference type="NCBI Taxonomy" id="377628"/>
    <lineage>
        <taxon>Bacteria</taxon>
        <taxon>Pseudomonadati</taxon>
        <taxon>Pseudomonadota</taxon>
        <taxon>Gammaproteobacteria</taxon>
        <taxon>Enterobacterales</taxon>
        <taxon>Yersiniaceae</taxon>
        <taxon>Yersinia</taxon>
    </lineage>
</organism>
<accession>Q1CJG7</accession>
<accession>C4GSF9</accession>
<gene>
    <name evidence="1" type="primary">ruvC</name>
    <name type="ordered locus">YPN_1533</name>
    <name type="ORF">YP516_1701</name>
</gene>